<reference key="1">
    <citation type="journal article" date="1996" name="J. Exp. Biol.">
        <title>Two opsins from the compound eye of the crab Hemigrapsus sanguineus.</title>
        <authorList>
            <person name="Sakamoto K."/>
            <person name="Hisatomi O."/>
            <person name="Tokunaga F."/>
            <person name="Eguchi E."/>
        </authorList>
    </citation>
    <scope>NUCLEOTIDE SEQUENCE [MRNA]</scope>
    <source>
        <tissue>Eye</tissue>
    </source>
</reference>
<sequence length="377" mass="42196">MANVTGPQMAFYGSGAATFGYPEGMTVADFVPDRVKHMVLDHWYNYPPVNPMWHYLLGVVYLFLGVISIAGNGLVIYLYMKSQALKTPANMLIVNLALSDLIMLTTNFPPFCYNCFSGGRWMFSGTYCEIYAALGAITGVCSIWTLCMISFDRYNIICNGFNGPKLTQGKATFMCGLAWVISVGWSLPPFFGWGSYTLEGILDSCSYDYFTRDMNTITYNICIFIFDFFLPASVIVFSYVFIVKAIFAHEAAMRAQAKKMNVTNLRSNEAETQRAEIRIAKTALVNVSLWFICWTPYAAITIQGLLGNAEGITPLLTTLPALLAKSCSCYNPFVYAISHPKFRLAITQHLPWFCVHEKDPNDVEENQSSNTQTQEKS</sequence>
<proteinExistence type="evidence at transcript level"/>
<comment type="function">
    <text>Visual pigments are the light-absorbing molecules that mediate vision. They consist of an apoprotein, opsin, covalently linked to cis-retinal. This opsin produces visual pigments with maximal absorption in the blue-green region of the spectrum.</text>
</comment>
<comment type="subcellular location">
    <subcellularLocation>
        <location>Membrane</location>
        <topology>Multi-pass membrane protein</topology>
    </subcellularLocation>
</comment>
<comment type="tissue specificity">
    <text>Expressed in all of the seven retinular cells (R1-R7) forming the main rhabdom in each ommatidium.</text>
</comment>
<comment type="PTM">
    <text evidence="1">Phosphorylated on some or all of the serine and threonine residues present in the C-terminal region.</text>
</comment>
<comment type="similarity">
    <text evidence="3">Belongs to the G-protein coupled receptor 1 family. Opsin subfamily.</text>
</comment>
<organism>
    <name type="scientific">Hemigrapsus sanguineus</name>
    <name type="common">Asian shore crab</name>
    <dbReference type="NCBI Taxonomy" id="40176"/>
    <lineage>
        <taxon>Eukaryota</taxon>
        <taxon>Metazoa</taxon>
        <taxon>Ecdysozoa</taxon>
        <taxon>Arthropoda</taxon>
        <taxon>Crustacea</taxon>
        <taxon>Multicrustacea</taxon>
        <taxon>Malacostraca</taxon>
        <taxon>Eumalacostraca</taxon>
        <taxon>Eucarida</taxon>
        <taxon>Decapoda</taxon>
        <taxon>Pleocyemata</taxon>
        <taxon>Brachyura</taxon>
        <taxon>Eubrachyura</taxon>
        <taxon>Grapsoidea</taxon>
        <taxon>Varunidae</taxon>
        <taxon>Hemigrapsus</taxon>
    </lineage>
</organism>
<evidence type="ECO:0000250" key="1"/>
<evidence type="ECO:0000255" key="2"/>
<evidence type="ECO:0000255" key="3">
    <source>
        <dbReference type="PROSITE-ProRule" id="PRU00521"/>
    </source>
</evidence>
<dbReference type="EMBL" id="D50583">
    <property type="protein sequence ID" value="BAA09132.1"/>
    <property type="molecule type" value="mRNA"/>
</dbReference>
<dbReference type="SMR" id="Q25157"/>
<dbReference type="GO" id="GO:0016020">
    <property type="term" value="C:membrane"/>
    <property type="evidence" value="ECO:0007669"/>
    <property type="project" value="UniProtKB-SubCell"/>
</dbReference>
<dbReference type="GO" id="GO:0004930">
    <property type="term" value="F:G protein-coupled receptor activity"/>
    <property type="evidence" value="ECO:0007669"/>
    <property type="project" value="UniProtKB-KW"/>
</dbReference>
<dbReference type="GO" id="GO:0009881">
    <property type="term" value="F:photoreceptor activity"/>
    <property type="evidence" value="ECO:0007669"/>
    <property type="project" value="UniProtKB-KW"/>
</dbReference>
<dbReference type="GO" id="GO:0007602">
    <property type="term" value="P:phototransduction"/>
    <property type="evidence" value="ECO:0007669"/>
    <property type="project" value="UniProtKB-KW"/>
</dbReference>
<dbReference type="GO" id="GO:0007601">
    <property type="term" value="P:visual perception"/>
    <property type="evidence" value="ECO:0007669"/>
    <property type="project" value="UniProtKB-KW"/>
</dbReference>
<dbReference type="CDD" id="cd15079">
    <property type="entry name" value="7tmA_photoreceptors_insect"/>
    <property type="match status" value="1"/>
</dbReference>
<dbReference type="FunFam" id="1.20.1070.10:FF:000044">
    <property type="entry name" value="Opsin, ultraviolet-sensitive"/>
    <property type="match status" value="1"/>
</dbReference>
<dbReference type="Gene3D" id="1.20.1070.10">
    <property type="entry name" value="Rhodopsin 7-helix transmembrane proteins"/>
    <property type="match status" value="1"/>
</dbReference>
<dbReference type="InterPro" id="IPR050125">
    <property type="entry name" value="GPCR_opsins"/>
</dbReference>
<dbReference type="InterPro" id="IPR000276">
    <property type="entry name" value="GPCR_Rhodpsn"/>
</dbReference>
<dbReference type="InterPro" id="IPR017452">
    <property type="entry name" value="GPCR_Rhodpsn_7TM"/>
</dbReference>
<dbReference type="InterPro" id="IPR001760">
    <property type="entry name" value="Opsin"/>
</dbReference>
<dbReference type="InterPro" id="IPR001391">
    <property type="entry name" value="Opsin_lateye"/>
</dbReference>
<dbReference type="InterPro" id="IPR027430">
    <property type="entry name" value="Retinal_BS"/>
</dbReference>
<dbReference type="PANTHER" id="PTHR24240">
    <property type="entry name" value="OPSIN"/>
    <property type="match status" value="1"/>
</dbReference>
<dbReference type="Pfam" id="PF00001">
    <property type="entry name" value="7tm_1"/>
    <property type="match status" value="1"/>
</dbReference>
<dbReference type="PRINTS" id="PR00237">
    <property type="entry name" value="GPCRRHODOPSN"/>
</dbReference>
<dbReference type="PRINTS" id="PR00238">
    <property type="entry name" value="OPSIN"/>
</dbReference>
<dbReference type="PRINTS" id="PR00578">
    <property type="entry name" value="OPSINLTRLEYE"/>
</dbReference>
<dbReference type="SMART" id="SM01381">
    <property type="entry name" value="7TM_GPCR_Srsx"/>
    <property type="match status" value="1"/>
</dbReference>
<dbReference type="SUPFAM" id="SSF81321">
    <property type="entry name" value="Family A G protein-coupled receptor-like"/>
    <property type="match status" value="1"/>
</dbReference>
<dbReference type="PROSITE" id="PS00237">
    <property type="entry name" value="G_PROTEIN_RECEP_F1_1"/>
    <property type="match status" value="1"/>
</dbReference>
<dbReference type="PROSITE" id="PS50262">
    <property type="entry name" value="G_PROTEIN_RECEP_F1_2"/>
    <property type="match status" value="1"/>
</dbReference>
<dbReference type="PROSITE" id="PS00238">
    <property type="entry name" value="OPSIN"/>
    <property type="match status" value="1"/>
</dbReference>
<feature type="chain" id="PRO_0000197749" description="Compound eye opsin BCRH1">
    <location>
        <begin position="1"/>
        <end position="377"/>
    </location>
</feature>
<feature type="topological domain" description="Extracellular">
    <location>
        <begin position="1"/>
        <end position="53"/>
    </location>
</feature>
<feature type="transmembrane region" description="Helical; Name=1" evidence="2">
    <location>
        <begin position="54"/>
        <end position="78"/>
    </location>
</feature>
<feature type="topological domain" description="Cytoplasmic">
    <location>
        <begin position="79"/>
        <end position="90"/>
    </location>
</feature>
<feature type="transmembrane region" description="Helical; Name=2" evidence="2">
    <location>
        <begin position="91"/>
        <end position="115"/>
    </location>
</feature>
<feature type="topological domain" description="Extracellular">
    <location>
        <begin position="116"/>
        <end position="131"/>
    </location>
</feature>
<feature type="transmembrane region" description="Helical; Name=3" evidence="2">
    <location>
        <begin position="132"/>
        <end position="151"/>
    </location>
</feature>
<feature type="topological domain" description="Cytoplasmic">
    <location>
        <begin position="152"/>
        <end position="170"/>
    </location>
</feature>
<feature type="transmembrane region" description="Helical; Name=4" evidence="2">
    <location>
        <begin position="171"/>
        <end position="194"/>
    </location>
</feature>
<feature type="topological domain" description="Extracellular">
    <location>
        <begin position="195"/>
        <end position="218"/>
    </location>
</feature>
<feature type="transmembrane region" description="Helical; Name=5" evidence="2">
    <location>
        <begin position="219"/>
        <end position="246"/>
    </location>
</feature>
<feature type="topological domain" description="Cytoplasmic">
    <location>
        <begin position="247"/>
        <end position="281"/>
    </location>
</feature>
<feature type="transmembrane region" description="Helical; Name=6" evidence="2">
    <location>
        <begin position="282"/>
        <end position="305"/>
    </location>
</feature>
<feature type="topological domain" description="Extracellular">
    <location>
        <begin position="306"/>
        <end position="313"/>
    </location>
</feature>
<feature type="transmembrane region" description="Helical; Name=7" evidence="2">
    <location>
        <begin position="314"/>
        <end position="338"/>
    </location>
</feature>
<feature type="topological domain" description="Cytoplasmic">
    <location>
        <begin position="339"/>
        <end position="377"/>
    </location>
</feature>
<feature type="modified residue" description="N6-(retinylidene)lysine" evidence="1">
    <location>
        <position position="325"/>
    </location>
</feature>
<feature type="glycosylation site" description="N-linked (GlcNAc...) asparagine" evidence="2">
    <location>
        <position position="3"/>
    </location>
</feature>
<feature type="disulfide bond" evidence="3">
    <location>
        <begin position="128"/>
        <end position="205"/>
    </location>
</feature>
<protein>
    <recommendedName>
        <fullName>Compound eye opsin BCRH1</fullName>
    </recommendedName>
</protein>
<keyword id="KW-0157">Chromophore</keyword>
<keyword id="KW-1015">Disulfide bond</keyword>
<keyword id="KW-0297">G-protein coupled receptor</keyword>
<keyword id="KW-0325">Glycoprotein</keyword>
<keyword id="KW-0472">Membrane</keyword>
<keyword id="KW-0597">Phosphoprotein</keyword>
<keyword id="KW-0600">Photoreceptor protein</keyword>
<keyword id="KW-0675">Receptor</keyword>
<keyword id="KW-0681">Retinal protein</keyword>
<keyword id="KW-0716">Sensory transduction</keyword>
<keyword id="KW-0807">Transducer</keyword>
<keyword id="KW-0812">Transmembrane</keyword>
<keyword id="KW-1133">Transmembrane helix</keyword>
<keyword id="KW-0844">Vision</keyword>
<name>OPSC1_HEMSA</name>
<accession>Q25157</accession>